<proteinExistence type="evidence at protein level"/>
<reference key="1">
    <citation type="journal article" date="1998" name="Nucleic Acids Res.">
        <title>The tRNA(guanine-26,N2-N2) methyltransferase (Trm1) from the hyperthermophilic archaeon Pyrococcus furiosus: cloning, sequencing of the gene and its expression in Escherichia coli.</title>
        <authorList>
            <person name="Constantinesco F."/>
            <person name="Benachenhou N."/>
            <person name="Motorin Y."/>
            <person name="Grosjean H."/>
        </authorList>
    </citation>
    <scope>NUCLEOTIDE SEQUENCE [GENOMIC DNA]</scope>
    <scope>FUNCTION</scope>
    <scope>CATALYTIC ACTIVITY</scope>
    <source>
        <strain>ATCC 43587 / DSM 3638 / JCM 8422 / Vc1</strain>
    </source>
</reference>
<reference key="2">
    <citation type="journal article" date="1999" name="Genetics">
        <title>Divergence of the hyperthermophilic archaea Pyrococcus furiosus and P. horikoshii inferred from complete genomic sequences.</title>
        <authorList>
            <person name="Maeder D.L."/>
            <person name="Weiss R.B."/>
            <person name="Dunn D.M."/>
            <person name="Cherry J.L."/>
            <person name="Gonzalez J.M."/>
            <person name="DiRuggiero J."/>
            <person name="Robb F.T."/>
        </authorList>
    </citation>
    <scope>NUCLEOTIDE SEQUENCE [LARGE SCALE GENOMIC DNA]</scope>
    <source>
        <strain>ATCC 43587 / DSM 3638 / JCM 8422 / Vc1</strain>
    </source>
</reference>
<reference key="3">
    <citation type="journal article" date="1999" name="J. Mol. Biol.">
        <title>Characterisation and enzymatic properties of tRNA(guanine 26,N(2), N(2))-dimethyltransferase (Trm1p) from Pyrococcus furiosus.</title>
        <authorList>
            <person name="Constantinesco F."/>
            <person name="Motorin Y."/>
            <person name="Grosjean H."/>
        </authorList>
    </citation>
    <scope>FUNCTION</scope>
    <scope>SUBUNIT</scope>
    <scope>CATALYTIC ACTIVITY</scope>
    <source>
        <strain>ATCC 43587 / DSM 3638 / JCM 8422 / Vc1</strain>
    </source>
</reference>
<evidence type="ECO:0000255" key="1">
    <source>
        <dbReference type="HAMAP-Rule" id="MF_00290"/>
    </source>
</evidence>
<evidence type="ECO:0000269" key="2">
    <source>
    </source>
</evidence>
<evidence type="ECO:0000269" key="3">
    <source>
    </source>
</evidence>
<keyword id="KW-0489">Methyltransferase</keyword>
<keyword id="KW-1185">Reference proteome</keyword>
<keyword id="KW-0694">RNA-binding</keyword>
<keyword id="KW-0949">S-adenosyl-L-methionine</keyword>
<keyword id="KW-0808">Transferase</keyword>
<keyword id="KW-0819">tRNA processing</keyword>
<keyword id="KW-0820">tRNA-binding</keyword>
<accession>P81554</accession>
<organism>
    <name type="scientific">Pyrococcus furiosus (strain ATCC 43587 / DSM 3638 / JCM 8422 / Vc1)</name>
    <dbReference type="NCBI Taxonomy" id="186497"/>
    <lineage>
        <taxon>Archaea</taxon>
        <taxon>Methanobacteriati</taxon>
        <taxon>Methanobacteriota</taxon>
        <taxon>Thermococci</taxon>
        <taxon>Thermococcales</taxon>
        <taxon>Thermococcaceae</taxon>
        <taxon>Pyrococcus</taxon>
    </lineage>
</organism>
<dbReference type="EC" id="2.1.1.216" evidence="1"/>
<dbReference type="EMBL" id="AF051912">
    <property type="protein sequence ID" value="AAC31882.1"/>
    <property type="molecule type" value="Genomic_DNA"/>
</dbReference>
<dbReference type="EMBL" id="AE009950">
    <property type="protein sequence ID" value="AAL81995.1"/>
    <property type="molecule type" value="Genomic_DNA"/>
</dbReference>
<dbReference type="PIR" id="T51778">
    <property type="entry name" value="T51778"/>
</dbReference>
<dbReference type="SMR" id="P81554"/>
<dbReference type="IntAct" id="P81554">
    <property type="interactions" value="1"/>
</dbReference>
<dbReference type="STRING" id="186497.PF1871"/>
<dbReference type="PaxDb" id="186497-PF1871"/>
<dbReference type="KEGG" id="pfu:PF1871"/>
<dbReference type="PATRIC" id="fig|186497.12.peg.1941"/>
<dbReference type="eggNOG" id="arCOG01219">
    <property type="taxonomic scope" value="Archaea"/>
</dbReference>
<dbReference type="HOGENOM" id="CLU_010862_5_1_2"/>
<dbReference type="PhylomeDB" id="P81554"/>
<dbReference type="Proteomes" id="UP000001013">
    <property type="component" value="Chromosome"/>
</dbReference>
<dbReference type="GO" id="GO:0160104">
    <property type="term" value="F:tRNA (guanine(26)-N2)-dimethyltransferase activity"/>
    <property type="evidence" value="ECO:0007669"/>
    <property type="project" value="UniProtKB-UniRule"/>
</dbReference>
<dbReference type="GO" id="GO:0000049">
    <property type="term" value="F:tRNA binding"/>
    <property type="evidence" value="ECO:0007669"/>
    <property type="project" value="UniProtKB-KW"/>
</dbReference>
<dbReference type="GO" id="GO:0002940">
    <property type="term" value="P:tRNA N2-guanine methylation"/>
    <property type="evidence" value="ECO:0007669"/>
    <property type="project" value="TreeGrafter"/>
</dbReference>
<dbReference type="FunFam" id="3.30.56.70:FF:000001">
    <property type="entry name" value="tRNA (guanine(26)-N(2))-dimethyltransferase"/>
    <property type="match status" value="1"/>
</dbReference>
<dbReference type="FunFam" id="3.40.50.150:FF:000272">
    <property type="entry name" value="tRNA (guanine(26)-N(2))-dimethyltransferase"/>
    <property type="match status" value="1"/>
</dbReference>
<dbReference type="Gene3D" id="3.30.56.70">
    <property type="entry name" value="N2,N2-dimethylguanosine tRNA methyltransferase, C-terminal domain"/>
    <property type="match status" value="1"/>
</dbReference>
<dbReference type="Gene3D" id="3.40.50.150">
    <property type="entry name" value="Vaccinia Virus protein VP39"/>
    <property type="match status" value="1"/>
</dbReference>
<dbReference type="HAMAP" id="MF_00290">
    <property type="entry name" value="tRNA_dimethyltr_TRM1"/>
    <property type="match status" value="1"/>
</dbReference>
<dbReference type="InterPro" id="IPR029063">
    <property type="entry name" value="SAM-dependent_MTases_sf"/>
</dbReference>
<dbReference type="InterPro" id="IPR002905">
    <property type="entry name" value="Trm1"/>
</dbReference>
<dbReference type="InterPro" id="IPR022923">
    <property type="entry name" value="TRM1_arc_bac"/>
</dbReference>
<dbReference type="InterPro" id="IPR042296">
    <property type="entry name" value="tRNA_met_Trm1_C"/>
</dbReference>
<dbReference type="NCBIfam" id="TIGR00308">
    <property type="entry name" value="TRM1"/>
    <property type="match status" value="1"/>
</dbReference>
<dbReference type="PANTHER" id="PTHR10631">
    <property type="entry name" value="N 2 ,N 2 -DIMETHYLGUANOSINE TRNA METHYLTRANSFERASE"/>
    <property type="match status" value="1"/>
</dbReference>
<dbReference type="PANTHER" id="PTHR10631:SF3">
    <property type="entry name" value="TRNA (GUANINE(26)-N(2))-DIMETHYLTRANSFERASE"/>
    <property type="match status" value="1"/>
</dbReference>
<dbReference type="Pfam" id="PF02005">
    <property type="entry name" value="TRM"/>
    <property type="match status" value="1"/>
</dbReference>
<dbReference type="SUPFAM" id="SSF53335">
    <property type="entry name" value="S-adenosyl-L-methionine-dependent methyltransferases"/>
    <property type="match status" value="1"/>
</dbReference>
<dbReference type="PROSITE" id="PS51626">
    <property type="entry name" value="SAM_MT_TRM1"/>
    <property type="match status" value="1"/>
</dbReference>
<comment type="function">
    <text evidence="1 2 3">Dimethylates a single guanine residue at position 26 of a number of tRNAs using S-adenosyl-L-methionine as donor of the methyl groups.</text>
</comment>
<comment type="catalytic activity">
    <reaction evidence="1 2 3">
        <text>guanosine(26) in tRNA + 2 S-adenosyl-L-methionine = N(2)-dimethylguanosine(26) in tRNA + 2 S-adenosyl-L-homocysteine + 2 H(+)</text>
        <dbReference type="Rhea" id="RHEA:43140"/>
        <dbReference type="Rhea" id="RHEA-COMP:10359"/>
        <dbReference type="Rhea" id="RHEA-COMP:10360"/>
        <dbReference type="ChEBI" id="CHEBI:15378"/>
        <dbReference type="ChEBI" id="CHEBI:57856"/>
        <dbReference type="ChEBI" id="CHEBI:59789"/>
        <dbReference type="ChEBI" id="CHEBI:74269"/>
        <dbReference type="ChEBI" id="CHEBI:74513"/>
        <dbReference type="EC" id="2.1.1.216"/>
    </reaction>
</comment>
<comment type="subunit">
    <text evidence="2">Monomer.</text>
</comment>
<comment type="similarity">
    <text evidence="1">Belongs to the class I-like SAM-binding methyltransferase superfamily. Trm1 family.</text>
</comment>
<name>TRM1_PYRFU</name>
<feature type="chain" id="PRO_0000147689" description="tRNA (guanine(26)-N(2))-dimethyltransferase">
    <location>
        <begin position="1"/>
        <end position="381"/>
    </location>
</feature>
<feature type="domain" description="Trm1 methyltransferase" evidence="1">
    <location>
        <begin position="6"/>
        <end position="378"/>
    </location>
</feature>
<feature type="binding site" evidence="1">
    <location>
        <position position="38"/>
    </location>
    <ligand>
        <name>S-adenosyl-L-methionine</name>
        <dbReference type="ChEBI" id="CHEBI:59789"/>
    </ligand>
</feature>
<feature type="binding site" evidence="1">
    <location>
        <position position="63"/>
    </location>
    <ligand>
        <name>S-adenosyl-L-methionine</name>
        <dbReference type="ChEBI" id="CHEBI:59789"/>
    </ligand>
</feature>
<feature type="binding site" evidence="1">
    <location>
        <position position="80"/>
    </location>
    <ligand>
        <name>S-adenosyl-L-methionine</name>
        <dbReference type="ChEBI" id="CHEBI:59789"/>
    </ligand>
</feature>
<feature type="binding site" evidence="1">
    <location>
        <position position="122"/>
    </location>
    <ligand>
        <name>S-adenosyl-L-methionine</name>
        <dbReference type="ChEBI" id="CHEBI:59789"/>
    </ligand>
</feature>
<feature type="binding site" evidence="1">
    <location>
        <position position="123"/>
    </location>
    <ligand>
        <name>S-adenosyl-L-methionine</name>
        <dbReference type="ChEBI" id="CHEBI:59789"/>
    </ligand>
</feature>
<gene>
    <name evidence="1" type="primary">trm1</name>
    <name type="ordered locus">PF1871</name>
</gene>
<protein>
    <recommendedName>
        <fullName evidence="1">tRNA (guanine(26)-N(2))-dimethyltransferase</fullName>
        <ecNumber evidence="1">2.1.1.216</ecNumber>
    </recommendedName>
    <alternativeName>
        <fullName evidence="1">tRNA 2,2-dimethylguanosine-26 methyltransferase</fullName>
    </alternativeName>
    <alternativeName>
        <fullName evidence="1">tRNA(guanine-26,N(2)-N(2)) methyltransferase</fullName>
    </alternativeName>
    <alternativeName>
        <fullName evidence="1">tRNA(m(2,2)G26)dimethyltransferase</fullName>
    </alternativeName>
</protein>
<sequence>MSMELFEVHEGKAKVLVPKAKTIYDSPVFYNPRMAPNRDVVVLLLNVLKPKIVLDALSATGIRGIRFALETPAEEIWMNDINELAYELMKKNVLLNFKGTLKENAKRAIFEGEKTIVINNDDANRLMAEKHRYFHFIDLDPFGSPMEFLDTALRSVKRKGILGVTATDGAPLCGAHPKACLRKYLAVPLRGELCHEVGTRILVGVIARYAAKYDLGMEVLLAYYKDHYFRAFVKLKDGAKKGDETLENLGYVYFDEKTGRFEVEKSFLSTRPNAYGPLWLGPLKNEKVVGEMLELLVSGFEVANYREVLKLLHMLHEELDIPLFYDTHALGKRLKIEPKKLGEIIKELKSMGYEATRTHFSPTGIKTNAPYEVFVEVMRKN</sequence>